<accession>Q9RXE1</accession>
<name>SYK_DEIRA</name>
<feature type="chain" id="PRO_0000152621" description="Lysine--tRNA ligase">
    <location>
        <begin position="1"/>
        <end position="525"/>
    </location>
</feature>
<feature type="binding site" evidence="1">
    <location>
        <position position="419"/>
    </location>
    <ligand>
        <name>Mg(2+)</name>
        <dbReference type="ChEBI" id="CHEBI:18420"/>
        <label>1</label>
    </ligand>
</feature>
<feature type="binding site" evidence="1">
    <location>
        <position position="426"/>
    </location>
    <ligand>
        <name>Mg(2+)</name>
        <dbReference type="ChEBI" id="CHEBI:18420"/>
        <label>1</label>
    </ligand>
</feature>
<feature type="binding site" evidence="1">
    <location>
        <position position="426"/>
    </location>
    <ligand>
        <name>Mg(2+)</name>
        <dbReference type="ChEBI" id="CHEBI:18420"/>
        <label>2</label>
    </ligand>
</feature>
<organism>
    <name type="scientific">Deinococcus radiodurans (strain ATCC 13939 / DSM 20539 / JCM 16871 / CCUG 27074 / LMG 4051 / NBRC 15346 / NCIMB 9279 / VKM B-1422 / R1)</name>
    <dbReference type="NCBI Taxonomy" id="243230"/>
    <lineage>
        <taxon>Bacteria</taxon>
        <taxon>Thermotogati</taxon>
        <taxon>Deinococcota</taxon>
        <taxon>Deinococci</taxon>
        <taxon>Deinococcales</taxon>
        <taxon>Deinococcaceae</taxon>
        <taxon>Deinococcus</taxon>
    </lineage>
</organism>
<evidence type="ECO:0000250" key="1"/>
<evidence type="ECO:0000305" key="2"/>
<sequence length="525" mass="59302">MPDAPRPPRPEGLHEQTIARLNNLDAQVDAGFEAYPYSYPQTHHARDVFAAHPAREEGTGEGGTLEPGQKWEEESYSLAGRVTLMRHMGKAAFADLSDEDGKIQLFFSKQDTAGFDATKKIDLGDIIGVKGHPFVTKTGQLTLHVTEWQPLVKSLHPLPSKFHGLQDEELRARRRYVDLMVTEGAREKFQARSRMIRYIRNELDERGFMEVEGPTLQVTAGGAEARPFMTHHNALSYDFKLRISLELYLKRLLVGGFERVYEIGRVYRNEGIDRTHNPEFTMLELYWAYADYSDIAKLVEDLLSGLAKEVHGSYQFEYQGKTLDFTPPFARVDYLGGLREHVPGLDFDPLDLDRLRAFCDERFPQWKGVPSYKLLDKLFGEFVEPLLSNPTFVMDHPAVISPLAKKHRSRPEAVTERFEVFCSGFELANAFSELNDAFDQRERFEAQTARQAAGDDEAHPQDEDFLLALEYGMPPAGGLGIGIDRLAMLLTDSDSIRDVLLFPLLRPEGGEAEEADDTAQENTAG</sequence>
<keyword id="KW-0030">Aminoacyl-tRNA synthetase</keyword>
<keyword id="KW-0067">ATP-binding</keyword>
<keyword id="KW-0963">Cytoplasm</keyword>
<keyword id="KW-0436">Ligase</keyword>
<keyword id="KW-0460">Magnesium</keyword>
<keyword id="KW-0479">Metal-binding</keyword>
<keyword id="KW-0547">Nucleotide-binding</keyword>
<keyword id="KW-0648">Protein biosynthesis</keyword>
<keyword id="KW-1185">Reference proteome</keyword>
<dbReference type="EC" id="6.1.1.6"/>
<dbReference type="EMBL" id="AE000513">
    <property type="protein sequence ID" value="AAF09951.1"/>
    <property type="molecule type" value="Genomic_DNA"/>
</dbReference>
<dbReference type="PIR" id="G75527">
    <property type="entry name" value="G75527"/>
</dbReference>
<dbReference type="RefSeq" id="NP_294095.1">
    <property type="nucleotide sequence ID" value="NC_001263.1"/>
</dbReference>
<dbReference type="RefSeq" id="WP_010887017.1">
    <property type="nucleotide sequence ID" value="NC_001263.1"/>
</dbReference>
<dbReference type="SMR" id="Q9RXE1"/>
<dbReference type="FunCoup" id="Q9RXE1">
    <property type="interactions" value="515"/>
</dbReference>
<dbReference type="STRING" id="243230.DR_0372"/>
<dbReference type="PaxDb" id="243230-DR_0372"/>
<dbReference type="EnsemblBacteria" id="AAF09951">
    <property type="protein sequence ID" value="AAF09951"/>
    <property type="gene ID" value="DR_0372"/>
</dbReference>
<dbReference type="GeneID" id="69516604"/>
<dbReference type="KEGG" id="dra:DR_0372"/>
<dbReference type="PATRIC" id="fig|243230.17.peg.543"/>
<dbReference type="eggNOG" id="COG1190">
    <property type="taxonomic scope" value="Bacteria"/>
</dbReference>
<dbReference type="HOGENOM" id="CLU_008255_6_0_0"/>
<dbReference type="InParanoid" id="Q9RXE1"/>
<dbReference type="OrthoDB" id="9801152at2"/>
<dbReference type="Proteomes" id="UP000002524">
    <property type="component" value="Chromosome 1"/>
</dbReference>
<dbReference type="GO" id="GO:0005737">
    <property type="term" value="C:cytoplasm"/>
    <property type="evidence" value="ECO:0000318"/>
    <property type="project" value="GO_Central"/>
</dbReference>
<dbReference type="GO" id="GO:0005829">
    <property type="term" value="C:cytosol"/>
    <property type="evidence" value="ECO:0000318"/>
    <property type="project" value="GO_Central"/>
</dbReference>
<dbReference type="GO" id="GO:0005524">
    <property type="term" value="F:ATP binding"/>
    <property type="evidence" value="ECO:0007669"/>
    <property type="project" value="UniProtKB-UniRule"/>
</dbReference>
<dbReference type="GO" id="GO:0004824">
    <property type="term" value="F:lysine-tRNA ligase activity"/>
    <property type="evidence" value="ECO:0000318"/>
    <property type="project" value="GO_Central"/>
</dbReference>
<dbReference type="GO" id="GO:0000287">
    <property type="term" value="F:magnesium ion binding"/>
    <property type="evidence" value="ECO:0007669"/>
    <property type="project" value="UniProtKB-UniRule"/>
</dbReference>
<dbReference type="GO" id="GO:0000049">
    <property type="term" value="F:tRNA binding"/>
    <property type="evidence" value="ECO:0000318"/>
    <property type="project" value="GO_Central"/>
</dbReference>
<dbReference type="GO" id="GO:0006430">
    <property type="term" value="P:lysyl-tRNA aminoacylation"/>
    <property type="evidence" value="ECO:0000318"/>
    <property type="project" value="GO_Central"/>
</dbReference>
<dbReference type="CDD" id="cd00775">
    <property type="entry name" value="LysRS_core"/>
    <property type="match status" value="1"/>
</dbReference>
<dbReference type="CDD" id="cd04322">
    <property type="entry name" value="LysRS_N"/>
    <property type="match status" value="1"/>
</dbReference>
<dbReference type="FunFam" id="2.40.50.140:FF:000024">
    <property type="entry name" value="Lysine--tRNA ligase"/>
    <property type="match status" value="1"/>
</dbReference>
<dbReference type="FunFam" id="3.30.930.10:FF:000295">
    <property type="entry name" value="Lysine--tRNA ligase"/>
    <property type="match status" value="1"/>
</dbReference>
<dbReference type="Gene3D" id="3.30.930.10">
    <property type="entry name" value="Bira Bifunctional Protein, Domain 2"/>
    <property type="match status" value="1"/>
</dbReference>
<dbReference type="Gene3D" id="2.40.50.140">
    <property type="entry name" value="Nucleic acid-binding proteins"/>
    <property type="match status" value="1"/>
</dbReference>
<dbReference type="HAMAP" id="MF_00252">
    <property type="entry name" value="Lys_tRNA_synth_class2"/>
    <property type="match status" value="1"/>
</dbReference>
<dbReference type="InterPro" id="IPR004364">
    <property type="entry name" value="Aa-tRNA-synt_II"/>
</dbReference>
<dbReference type="InterPro" id="IPR006195">
    <property type="entry name" value="aa-tRNA-synth_II"/>
</dbReference>
<dbReference type="InterPro" id="IPR045864">
    <property type="entry name" value="aa-tRNA-synth_II/BPL/LPL"/>
</dbReference>
<dbReference type="InterPro" id="IPR002313">
    <property type="entry name" value="Lys-tRNA-ligase_II"/>
</dbReference>
<dbReference type="InterPro" id="IPR044136">
    <property type="entry name" value="Lys-tRNA-ligase_II_N"/>
</dbReference>
<dbReference type="InterPro" id="IPR018149">
    <property type="entry name" value="Lys-tRNA-synth_II_C"/>
</dbReference>
<dbReference type="InterPro" id="IPR012340">
    <property type="entry name" value="NA-bd_OB-fold"/>
</dbReference>
<dbReference type="InterPro" id="IPR004365">
    <property type="entry name" value="NA-bd_OB_tRNA"/>
</dbReference>
<dbReference type="NCBIfam" id="TIGR00499">
    <property type="entry name" value="lysS_bact"/>
    <property type="match status" value="1"/>
</dbReference>
<dbReference type="NCBIfam" id="NF001756">
    <property type="entry name" value="PRK00484.1"/>
    <property type="match status" value="1"/>
</dbReference>
<dbReference type="PANTHER" id="PTHR42918:SF15">
    <property type="entry name" value="LYSINE--TRNA LIGASE, CHLOROPLASTIC_MITOCHONDRIAL"/>
    <property type="match status" value="1"/>
</dbReference>
<dbReference type="PANTHER" id="PTHR42918">
    <property type="entry name" value="LYSYL-TRNA SYNTHETASE"/>
    <property type="match status" value="1"/>
</dbReference>
<dbReference type="Pfam" id="PF00152">
    <property type="entry name" value="tRNA-synt_2"/>
    <property type="match status" value="1"/>
</dbReference>
<dbReference type="Pfam" id="PF01336">
    <property type="entry name" value="tRNA_anti-codon"/>
    <property type="match status" value="1"/>
</dbReference>
<dbReference type="PRINTS" id="PR00982">
    <property type="entry name" value="TRNASYNTHLYS"/>
</dbReference>
<dbReference type="SUPFAM" id="SSF55681">
    <property type="entry name" value="Class II aaRS and biotin synthetases"/>
    <property type="match status" value="1"/>
</dbReference>
<dbReference type="SUPFAM" id="SSF50249">
    <property type="entry name" value="Nucleic acid-binding proteins"/>
    <property type="match status" value="1"/>
</dbReference>
<dbReference type="PROSITE" id="PS50862">
    <property type="entry name" value="AA_TRNA_LIGASE_II"/>
    <property type="match status" value="1"/>
</dbReference>
<reference key="1">
    <citation type="journal article" date="1999" name="Science">
        <title>Genome sequence of the radioresistant bacterium Deinococcus radiodurans R1.</title>
        <authorList>
            <person name="White O."/>
            <person name="Eisen J.A."/>
            <person name="Heidelberg J.F."/>
            <person name="Hickey E.K."/>
            <person name="Peterson J.D."/>
            <person name="Dodson R.J."/>
            <person name="Haft D.H."/>
            <person name="Gwinn M.L."/>
            <person name="Nelson W.C."/>
            <person name="Richardson D.L."/>
            <person name="Moffat K.S."/>
            <person name="Qin H."/>
            <person name="Jiang L."/>
            <person name="Pamphile W."/>
            <person name="Crosby M."/>
            <person name="Shen M."/>
            <person name="Vamathevan J.J."/>
            <person name="Lam P."/>
            <person name="McDonald L.A."/>
            <person name="Utterback T.R."/>
            <person name="Zalewski C."/>
            <person name="Makarova K.S."/>
            <person name="Aravind L."/>
            <person name="Daly M.J."/>
            <person name="Minton K.W."/>
            <person name="Fleischmann R.D."/>
            <person name="Ketchum K.A."/>
            <person name="Nelson K.E."/>
            <person name="Salzberg S.L."/>
            <person name="Smith H.O."/>
            <person name="Venter J.C."/>
            <person name="Fraser C.M."/>
        </authorList>
    </citation>
    <scope>NUCLEOTIDE SEQUENCE [LARGE SCALE GENOMIC DNA]</scope>
    <source>
        <strain>ATCC 13939 / DSM 20539 / JCM 16871 / CCUG 27074 / LMG 4051 / NBRC 15346 / NCIMB 9279 / VKM B-1422 / R1</strain>
    </source>
</reference>
<comment type="catalytic activity">
    <reaction>
        <text>tRNA(Lys) + L-lysine + ATP = L-lysyl-tRNA(Lys) + AMP + diphosphate</text>
        <dbReference type="Rhea" id="RHEA:20792"/>
        <dbReference type="Rhea" id="RHEA-COMP:9696"/>
        <dbReference type="Rhea" id="RHEA-COMP:9697"/>
        <dbReference type="ChEBI" id="CHEBI:30616"/>
        <dbReference type="ChEBI" id="CHEBI:32551"/>
        <dbReference type="ChEBI" id="CHEBI:33019"/>
        <dbReference type="ChEBI" id="CHEBI:78442"/>
        <dbReference type="ChEBI" id="CHEBI:78529"/>
        <dbReference type="ChEBI" id="CHEBI:456215"/>
        <dbReference type="EC" id="6.1.1.6"/>
    </reaction>
</comment>
<comment type="cofactor">
    <cofactor evidence="1">
        <name>Mg(2+)</name>
        <dbReference type="ChEBI" id="CHEBI:18420"/>
    </cofactor>
    <text evidence="1">Binds 3 Mg(2+) ions per subunit.</text>
</comment>
<comment type="subunit">
    <text evidence="1">Homodimer.</text>
</comment>
<comment type="subcellular location">
    <subcellularLocation>
        <location evidence="1">Cytoplasm</location>
    </subcellularLocation>
</comment>
<comment type="similarity">
    <text evidence="2">Belongs to the class-II aminoacyl-tRNA synthetase family.</text>
</comment>
<protein>
    <recommendedName>
        <fullName>Lysine--tRNA ligase</fullName>
        <ecNumber>6.1.1.6</ecNumber>
    </recommendedName>
    <alternativeName>
        <fullName>Lysyl-tRNA synthetase</fullName>
        <shortName>LysRS</shortName>
    </alternativeName>
</protein>
<gene>
    <name type="primary">lysS</name>
    <name type="ordered locus">DR_0372</name>
</gene>
<proteinExistence type="inferred from homology"/>